<organism>
    <name type="scientific">Halobacterium salinarum (strain ATCC 700922 / JCM 11081 / NRC-1)</name>
    <name type="common">Halobacterium halobium</name>
    <dbReference type="NCBI Taxonomy" id="64091"/>
    <lineage>
        <taxon>Archaea</taxon>
        <taxon>Methanobacteriati</taxon>
        <taxon>Methanobacteriota</taxon>
        <taxon>Stenosarchaea group</taxon>
        <taxon>Halobacteria</taxon>
        <taxon>Halobacteriales</taxon>
        <taxon>Halobacteriaceae</taxon>
        <taxon>Halobacterium</taxon>
        <taxon>Halobacterium salinarum NRC-34001</taxon>
    </lineage>
</organism>
<proteinExistence type="inferred from homology"/>
<comment type="function">
    <text evidence="1">Involved in regulation of DNA replication.</text>
</comment>
<comment type="disruption phenotype">
    <text evidence="2">Not essential for normal growth.</text>
</comment>
<comment type="similarity">
    <text evidence="1">Belongs to the CDC6/cdc18 family.</text>
</comment>
<accession>Q9HQC7</accession>
<gene>
    <name type="primary">orc8</name>
    <name type="ordered locus">VNG_1224G</name>
</gene>
<keyword id="KW-0067">ATP-binding</keyword>
<keyword id="KW-0235">DNA replication</keyword>
<keyword id="KW-0547">Nucleotide-binding</keyword>
<keyword id="KW-1185">Reference proteome</keyword>
<dbReference type="EMBL" id="AE004437">
    <property type="protein sequence ID" value="AAG19588.1"/>
    <property type="molecule type" value="Genomic_DNA"/>
</dbReference>
<dbReference type="PIR" id="H84277">
    <property type="entry name" value="H84277"/>
</dbReference>
<dbReference type="RefSeq" id="WP_010902884.1">
    <property type="nucleotide sequence ID" value="NC_002607.1"/>
</dbReference>
<dbReference type="SMR" id="Q9HQC7"/>
<dbReference type="STRING" id="64091.VNG_1224G"/>
<dbReference type="PaxDb" id="64091-VNG_1224G"/>
<dbReference type="GeneID" id="89349568"/>
<dbReference type="KEGG" id="hal:VNG_1224G"/>
<dbReference type="PATRIC" id="fig|64091.14.peg.936"/>
<dbReference type="HOGENOM" id="CLU_025112_3_1_2"/>
<dbReference type="InParanoid" id="Q9HQC7"/>
<dbReference type="OrthoDB" id="195574at2157"/>
<dbReference type="PhylomeDB" id="Q9HQC7"/>
<dbReference type="Proteomes" id="UP000000554">
    <property type="component" value="Chromosome"/>
</dbReference>
<dbReference type="GO" id="GO:0005524">
    <property type="term" value="F:ATP binding"/>
    <property type="evidence" value="ECO:0007669"/>
    <property type="project" value="UniProtKB-UniRule"/>
</dbReference>
<dbReference type="GO" id="GO:0016887">
    <property type="term" value="F:ATP hydrolysis activity"/>
    <property type="evidence" value="ECO:0007669"/>
    <property type="project" value="InterPro"/>
</dbReference>
<dbReference type="GO" id="GO:0006260">
    <property type="term" value="P:DNA replication"/>
    <property type="evidence" value="ECO:0007669"/>
    <property type="project" value="UniProtKB-UniRule"/>
</dbReference>
<dbReference type="CDD" id="cd08768">
    <property type="entry name" value="Cdc6_C"/>
    <property type="match status" value="1"/>
</dbReference>
<dbReference type="FunFam" id="1.10.8.60:FF:000073">
    <property type="entry name" value="ORC1-type DNA replication protein"/>
    <property type="match status" value="1"/>
</dbReference>
<dbReference type="FunFam" id="3.40.50.300:FF:000930">
    <property type="entry name" value="ORC1-type DNA replication protein"/>
    <property type="match status" value="1"/>
</dbReference>
<dbReference type="Gene3D" id="1.10.8.60">
    <property type="match status" value="1"/>
</dbReference>
<dbReference type="Gene3D" id="3.40.50.300">
    <property type="entry name" value="P-loop containing nucleotide triphosphate hydrolases"/>
    <property type="match status" value="1"/>
</dbReference>
<dbReference type="Gene3D" id="1.10.10.10">
    <property type="entry name" value="Winged helix-like DNA-binding domain superfamily/Winged helix DNA-binding domain"/>
    <property type="match status" value="1"/>
</dbReference>
<dbReference type="HAMAP" id="MF_01407">
    <property type="entry name" value="ORC1_type_DNA_replic_protein"/>
    <property type="match status" value="1"/>
</dbReference>
<dbReference type="InterPro" id="IPR003593">
    <property type="entry name" value="AAA+_ATPase"/>
</dbReference>
<dbReference type="InterPro" id="IPR041664">
    <property type="entry name" value="AAA_16"/>
</dbReference>
<dbReference type="InterPro" id="IPR015163">
    <property type="entry name" value="Cdc6_C"/>
</dbReference>
<dbReference type="InterPro" id="IPR055237">
    <property type="entry name" value="Cdc6_lid"/>
</dbReference>
<dbReference type="InterPro" id="IPR050311">
    <property type="entry name" value="ORC1/CDC6"/>
</dbReference>
<dbReference type="InterPro" id="IPR014277">
    <property type="entry name" value="Orc1/Cdc6_arc"/>
</dbReference>
<dbReference type="InterPro" id="IPR027417">
    <property type="entry name" value="P-loop_NTPase"/>
</dbReference>
<dbReference type="InterPro" id="IPR036388">
    <property type="entry name" value="WH-like_DNA-bd_sf"/>
</dbReference>
<dbReference type="InterPro" id="IPR036390">
    <property type="entry name" value="WH_DNA-bd_sf"/>
</dbReference>
<dbReference type="NCBIfam" id="TIGR02928">
    <property type="entry name" value="orc1/cdc6 family replication initiation protein"/>
    <property type="match status" value="1"/>
</dbReference>
<dbReference type="PANTHER" id="PTHR10763">
    <property type="entry name" value="CELL DIVISION CONTROL PROTEIN 6-RELATED"/>
    <property type="match status" value="1"/>
</dbReference>
<dbReference type="PANTHER" id="PTHR10763:SF22">
    <property type="entry name" value="ORC1-TYPE DNA REPLICATION PROTEIN"/>
    <property type="match status" value="1"/>
</dbReference>
<dbReference type="Pfam" id="PF13191">
    <property type="entry name" value="AAA_16"/>
    <property type="match status" value="1"/>
</dbReference>
<dbReference type="Pfam" id="PF09079">
    <property type="entry name" value="Cdc6_C"/>
    <property type="match status" value="1"/>
</dbReference>
<dbReference type="Pfam" id="PF22703">
    <property type="entry name" value="Cdc6_lid"/>
    <property type="match status" value="1"/>
</dbReference>
<dbReference type="SMART" id="SM00382">
    <property type="entry name" value="AAA"/>
    <property type="match status" value="1"/>
</dbReference>
<dbReference type="SMART" id="SM01074">
    <property type="entry name" value="Cdc6_C"/>
    <property type="match status" value="1"/>
</dbReference>
<dbReference type="SUPFAM" id="SSF52540">
    <property type="entry name" value="P-loop containing nucleoside triphosphate hydrolases"/>
    <property type="match status" value="1"/>
</dbReference>
<dbReference type="SUPFAM" id="SSF46785">
    <property type="entry name" value="Winged helix' DNA-binding domain"/>
    <property type="match status" value="1"/>
</dbReference>
<sequence length="397" mass="44288">MKTPFRDRVELFANKDVLKDHYEPEEIRERDEEIDQYANALQDVVDGWEPDNVFVYGKTGVGKTAVTRYMMDALEYEADDRDGVDSVTSVEVNCHHHPSSYQAAIALVNELRGDTDSDPLTTGLSTSDVLNALFDEIEAREGTVLIVLDEIDNLDDDDMLLYQLPRAKTNGNIEDSQVAVVGISNDYTFRNDLSPKVQDTLCEREIKFPPYDANELVTILDDRAERALSSGVLTGGVIPQCAALAARDRGSARQAIDLLRESVNVAIEDERETVTEDDVETAVRRVERGRIKDSIKDLTTHGQYVLLAVTQTAIADDTPVRAKELYEVYADIAAEYASDPLSQRSVHDHLNDLSMLGFLRQHDRNYGRGGGQFFEYELDVDATMVQEAIADADDATV</sequence>
<evidence type="ECO:0000255" key="1">
    <source>
        <dbReference type="HAMAP-Rule" id="MF_01407"/>
    </source>
</evidence>
<evidence type="ECO:0000269" key="2">
    <source>
    </source>
</evidence>
<protein>
    <recommendedName>
        <fullName evidence="1">ORC1-type DNA replication protein 8</fullName>
    </recommendedName>
</protein>
<reference key="1">
    <citation type="journal article" date="2000" name="Proc. Natl. Acad. Sci. U.S.A.">
        <title>Genome sequence of Halobacterium species NRC-1.</title>
        <authorList>
            <person name="Ng W.V."/>
            <person name="Kennedy S.P."/>
            <person name="Mahairas G.G."/>
            <person name="Berquist B."/>
            <person name="Pan M."/>
            <person name="Shukla H.D."/>
            <person name="Lasky S.R."/>
            <person name="Baliga N.S."/>
            <person name="Thorsson V."/>
            <person name="Sbrogna J."/>
            <person name="Swartzell S."/>
            <person name="Weir D."/>
            <person name="Hall J."/>
            <person name="Dahl T.A."/>
            <person name="Welti R."/>
            <person name="Goo Y.A."/>
            <person name="Leithauser B."/>
            <person name="Keller K."/>
            <person name="Cruz R."/>
            <person name="Danson M.J."/>
            <person name="Hough D.W."/>
            <person name="Maddocks D.G."/>
            <person name="Jablonski P.E."/>
            <person name="Krebs M.P."/>
            <person name="Angevine C.M."/>
            <person name="Dale H."/>
            <person name="Isenbarger T.A."/>
            <person name="Peck R.F."/>
            <person name="Pohlschroder M."/>
            <person name="Spudich J.L."/>
            <person name="Jung K.-H."/>
            <person name="Alam M."/>
            <person name="Freitas T."/>
            <person name="Hou S."/>
            <person name="Daniels C.J."/>
            <person name="Dennis P.P."/>
            <person name="Omer A.D."/>
            <person name="Ebhardt H."/>
            <person name="Lowe T.M."/>
            <person name="Liang P."/>
            <person name="Riley M."/>
            <person name="Hood L."/>
            <person name="DasSarma S."/>
        </authorList>
    </citation>
    <scope>NUCLEOTIDE SEQUENCE [LARGE SCALE GENOMIC DNA]</scope>
    <source>
        <strain>ATCC 700922 / JCM 11081 / NRC-1</strain>
    </source>
</reference>
<reference key="2">
    <citation type="journal article" date="2007" name="BMC Genet.">
        <title>Essential and non-essential DNA replication genes in the model halophilic Archaeon, Halobacterium sp. NRC-1.</title>
        <authorList>
            <person name="Berquist B.R."/>
            <person name="DasSarma P."/>
            <person name="DasSarma S."/>
        </authorList>
    </citation>
    <scope>DISRUPTION PHENOTYPE</scope>
    <source>
        <strain>ATCC 700922 / JCM 11081 / NRC-1</strain>
    </source>
</reference>
<name>CDC68_HALSA</name>
<feature type="chain" id="PRO_0000150997" description="ORC1-type DNA replication protein 8">
    <location>
        <begin position="1"/>
        <end position="397"/>
    </location>
</feature>
<feature type="binding site" evidence="1">
    <location>
        <begin position="61"/>
        <end position="65"/>
    </location>
    <ligand>
        <name>ATP</name>
        <dbReference type="ChEBI" id="CHEBI:30616"/>
    </ligand>
</feature>
<feature type="binding site" evidence="1">
    <location>
        <position position="211"/>
    </location>
    <ligand>
        <name>ATP</name>
        <dbReference type="ChEBI" id="CHEBI:30616"/>
    </ligand>
</feature>
<feature type="binding site" evidence="1">
    <location>
        <position position="223"/>
    </location>
    <ligand>
        <name>ATP</name>
        <dbReference type="ChEBI" id="CHEBI:30616"/>
    </ligand>
</feature>